<organism>
    <name type="scientific">Escherichia coli (strain K12)</name>
    <dbReference type="NCBI Taxonomy" id="83333"/>
    <lineage>
        <taxon>Bacteria</taxon>
        <taxon>Pseudomonadati</taxon>
        <taxon>Pseudomonadota</taxon>
        <taxon>Gammaproteobacteria</taxon>
        <taxon>Enterobacterales</taxon>
        <taxon>Enterobacteriaceae</taxon>
        <taxon>Escherichia</taxon>
    </lineage>
</organism>
<comment type="function">
    <text evidence="7 8">Catalyzes the conversion of pyruvate to formate and acetyl-CoA (PubMed:4615902). In addition, may be involved in the control of the activity of the formate channel FocA, via direct interaction with FocA (PubMed:24887098).</text>
</comment>
<comment type="catalytic activity">
    <reaction evidence="8">
        <text>formate + acetyl-CoA = pyruvate + CoA</text>
        <dbReference type="Rhea" id="RHEA:11844"/>
        <dbReference type="ChEBI" id="CHEBI:15361"/>
        <dbReference type="ChEBI" id="CHEBI:15740"/>
        <dbReference type="ChEBI" id="CHEBI:57287"/>
        <dbReference type="ChEBI" id="CHEBI:57288"/>
        <dbReference type="EC" id="2.3.1.54"/>
    </reaction>
</comment>
<comment type="biophysicochemical properties">
    <kinetics>
        <KM evidence="8">2.05 mM for pyruvate (at pH 8.1 and 30 degrees Celsius)</KM>
        <KM evidence="8">0.0068 mM for CoA (at pH 8.1 and 30 degrees Celsius)</KM>
        <KM evidence="8">24.5 mM for formate (at pH 8.1 and 30 degrees Celsius)</KM>
        <KM evidence="8">0.051 mM for acetyl-CoA (at pH 8.1 and 30 degrees Celsius)</KM>
        <text evidence="8">kcat is 1100 sec(-1) with pyruvate and CoA as substrates. kcat is 380 sec(-1) with formate and acetyl-CoA as substrates.</text>
    </kinetics>
</comment>
<comment type="pathway">
    <text>Fermentation; pyruvate fermentation; formate from pyruvate: step 1/1.</text>
</comment>
<comment type="subunit">
    <text evidence="3 7">Homodimer (PubMed:10504733). Interacts specifically with FocA (PubMed:24887098).</text>
</comment>
<comment type="interaction">
    <interactant intactId="EBI-546682">
        <id>P09373</id>
    </interactant>
    <interactant intactId="EBI-558448">
        <id>P15082</id>
        <label>srlR</label>
    </interactant>
    <organismsDiffer>false</organismsDiffer>
    <experiments>3</experiments>
</comment>
<comment type="interaction">
    <interactant intactId="EBI-546682">
        <id>P09373</id>
    </interactant>
    <interactant intactId="EBI-368978">
        <id>P0A858</id>
        <label>tpiA</label>
    </interactant>
    <organismsDiffer>false</organismsDiffer>
    <experiments>7</experiments>
</comment>
<comment type="subcellular location">
    <subcellularLocation>
        <location>Cytoplasm</location>
    </subcellularLocation>
</comment>
<comment type="induction">
    <text>By pfl-activating enzyme under anaerobic conditions by generation of an organic free radical. Exposure of activated pfl to oxygen resulted in cleavage at the glycine residue harboring its organic radical with loss of the 25 C-terminal AA.</text>
</comment>
<comment type="miscellaneous">
    <text>Several mechanisms have been proposed based on complexes formed with substrate analogs. After activation by the glycine radical, the cysteine radical, Cys-420, can abstract hydrogen atoms from the other active site cysteine, Cys-419, and from coenzyme A, and it can also transfer hydrogen atoms to product radicals. The other active site cysteine can attack the central carbonyl of pyruvate and covalently bind the product acetyl group.</text>
</comment>
<comment type="similarity">
    <text evidence="10">Belongs to the glycyl radical enzyme (GRE) family. PFL subfamily.</text>
</comment>
<proteinExistence type="evidence at protein level"/>
<feature type="initiator methionine" description="Removed" evidence="9">
    <location>
        <position position="1"/>
    </location>
</feature>
<feature type="chain" id="PRO_0000166687" description="Formate acetyltransferase 1">
    <location>
        <begin position="2"/>
        <end position="760"/>
    </location>
</feature>
<feature type="domain" description="PFL" evidence="2">
    <location>
        <begin position="3"/>
        <end position="625"/>
    </location>
</feature>
<feature type="domain" description="Glycine radical" evidence="1">
    <location>
        <begin position="632"/>
        <end position="760"/>
    </location>
</feature>
<feature type="active site" description="S-acetylcysteine intermediate" evidence="4">
    <location>
        <position position="419"/>
    </location>
</feature>
<feature type="active site" description="Cysteine radical intermediate" evidence="4">
    <location>
        <position position="420"/>
    </location>
</feature>
<feature type="modified residue" description="N6-acetyllysine; alternate" evidence="5">
    <location>
        <position position="63"/>
    </location>
</feature>
<feature type="modified residue" description="N6-succinyllysine; alternate" evidence="6">
    <location>
        <position position="63"/>
    </location>
</feature>
<feature type="modified residue" description="N6-succinyllysine" evidence="6">
    <location>
        <position position="107"/>
    </location>
</feature>
<feature type="modified residue" description="N6-acetyllysine; alternate" evidence="5">
    <location>
        <position position="117"/>
    </location>
</feature>
<feature type="modified residue" description="N6-succinyllysine; alternate" evidence="6">
    <location>
        <position position="117"/>
    </location>
</feature>
<feature type="modified residue" description="N6-succinyllysine" evidence="6">
    <location>
        <position position="124"/>
    </location>
</feature>
<feature type="modified residue" description="N6-acetyllysine; alternate" evidence="5">
    <location>
        <position position="195"/>
    </location>
</feature>
<feature type="modified residue" description="N6-succinyllysine; alternate" evidence="6">
    <location>
        <position position="195"/>
    </location>
</feature>
<feature type="modified residue" description="N6-acetyllysine; alternate" evidence="5">
    <location>
        <position position="454"/>
    </location>
</feature>
<feature type="modified residue" description="N6-succinyllysine; alternate" evidence="6">
    <location>
        <position position="454"/>
    </location>
</feature>
<feature type="modified residue" description="N6-succinyllysine" evidence="6">
    <location>
        <position position="467"/>
    </location>
</feature>
<feature type="modified residue" description="N6-acetyllysine" evidence="5">
    <location>
        <position position="541"/>
    </location>
</feature>
<feature type="modified residue" description="N6-acetyllysine" evidence="5">
    <location>
        <position position="591"/>
    </location>
</feature>
<feature type="modified residue" description="N6-succinyllysine" evidence="6">
    <location>
        <position position="654"/>
    </location>
</feature>
<feature type="modified residue" description="Glycine radical" evidence="4">
    <location>
        <position position="735"/>
    </location>
</feature>
<feature type="helix" evidence="12">
    <location>
        <begin position="6"/>
        <end position="11"/>
    </location>
</feature>
<feature type="turn" evidence="12">
    <location>
        <begin position="12"/>
        <end position="14"/>
    </location>
</feature>
<feature type="helix" evidence="12">
    <location>
        <begin position="19"/>
        <end position="21"/>
    </location>
</feature>
<feature type="helix" evidence="12">
    <location>
        <begin position="26"/>
        <end position="33"/>
    </location>
</feature>
<feature type="helix" evidence="12">
    <location>
        <begin position="41"/>
        <end position="43"/>
    </location>
</feature>
<feature type="helix" evidence="12">
    <location>
        <begin position="49"/>
        <end position="68"/>
    </location>
</feature>
<feature type="strand" evidence="12">
    <location>
        <begin position="72"/>
        <end position="79"/>
    </location>
</feature>
<feature type="strand" evidence="12">
    <location>
        <begin position="82"/>
        <end position="85"/>
    </location>
</feature>
<feature type="turn" evidence="12">
    <location>
        <begin position="92"/>
        <end position="94"/>
    </location>
</feature>
<feature type="strand" evidence="12">
    <location>
        <begin position="101"/>
        <end position="104"/>
    </location>
</feature>
<feature type="strand" evidence="12">
    <location>
        <begin position="107"/>
        <end position="110"/>
    </location>
</feature>
<feature type="helix" evidence="12">
    <location>
        <begin position="112"/>
        <end position="114"/>
    </location>
</feature>
<feature type="helix" evidence="12">
    <location>
        <begin position="117"/>
        <end position="125"/>
    </location>
</feature>
<feature type="helix" evidence="12">
    <location>
        <begin position="132"/>
        <end position="140"/>
    </location>
</feature>
<feature type="helix" evidence="12">
    <location>
        <begin position="145"/>
        <end position="152"/>
    </location>
</feature>
<feature type="helix" evidence="12">
    <location>
        <begin position="155"/>
        <end position="162"/>
    </location>
</feature>
<feature type="strand" evidence="14">
    <location>
        <begin position="164"/>
        <end position="167"/>
    </location>
</feature>
<feature type="strand" evidence="12">
    <location>
        <begin position="172"/>
        <end position="174"/>
    </location>
</feature>
<feature type="helix" evidence="12">
    <location>
        <begin position="183"/>
        <end position="188"/>
    </location>
</feature>
<feature type="helix" evidence="12">
    <location>
        <begin position="190"/>
        <end position="202"/>
    </location>
</feature>
<feature type="helix" evidence="12">
    <location>
        <begin position="205"/>
        <end position="210"/>
    </location>
</feature>
<feature type="turn" evidence="12">
    <location>
        <begin position="211"/>
        <end position="213"/>
    </location>
</feature>
<feature type="helix" evidence="12">
    <location>
        <begin position="214"/>
        <end position="240"/>
    </location>
</feature>
<feature type="helix" evidence="12">
    <location>
        <begin position="252"/>
        <end position="269"/>
    </location>
</feature>
<feature type="helix" evidence="12">
    <location>
        <begin position="281"/>
        <end position="293"/>
    </location>
</feature>
<feature type="helix" evidence="12">
    <location>
        <begin position="299"/>
        <end position="313"/>
    </location>
</feature>
<feature type="helix" evidence="12">
    <location>
        <begin position="322"/>
        <end position="327"/>
    </location>
</feature>
<feature type="strand" evidence="12">
    <location>
        <begin position="336"/>
        <end position="340"/>
    </location>
</feature>
<feature type="strand" evidence="11">
    <location>
        <begin position="346"/>
        <end position="348"/>
    </location>
</feature>
<feature type="helix" evidence="12">
    <location>
        <begin position="352"/>
        <end position="363"/>
    </location>
</feature>
<feature type="strand" evidence="12">
    <location>
        <begin position="370"/>
        <end position="376"/>
    </location>
</feature>
<feature type="helix" evidence="12">
    <location>
        <begin position="382"/>
        <end position="395"/>
    </location>
</feature>
<feature type="strand" evidence="12">
    <location>
        <begin position="399"/>
        <end position="402"/>
    </location>
</feature>
<feature type="helix" evidence="12">
    <location>
        <begin position="403"/>
        <end position="410"/>
    </location>
</feature>
<feature type="strand" evidence="12">
    <location>
        <begin position="415"/>
        <end position="418"/>
    </location>
</feature>
<feature type="turn" evidence="12">
    <location>
        <begin position="419"/>
        <end position="421"/>
    </location>
</feature>
<feature type="strand" evidence="12">
    <location>
        <begin position="422"/>
        <end position="425"/>
    </location>
</feature>
<feature type="turn" evidence="12">
    <location>
        <begin position="426"/>
        <end position="428"/>
    </location>
</feature>
<feature type="strand" evidence="12">
    <location>
        <begin position="429"/>
        <end position="438"/>
    </location>
</feature>
<feature type="helix" evidence="12">
    <location>
        <begin position="439"/>
        <end position="447"/>
    </location>
</feature>
<feature type="turn" evidence="12">
    <location>
        <begin position="448"/>
        <end position="450"/>
    </location>
</feature>
<feature type="turn" evidence="12">
    <location>
        <begin position="453"/>
        <end position="455"/>
    </location>
</feature>
<feature type="strand" evidence="12">
    <location>
        <begin position="468"/>
        <end position="470"/>
    </location>
</feature>
<feature type="helix" evidence="12">
    <location>
        <begin position="473"/>
        <end position="505"/>
    </location>
</feature>
<feature type="helix" evidence="12">
    <location>
        <begin position="509"/>
        <end position="512"/>
    </location>
</feature>
<feature type="strand" evidence="12">
    <location>
        <begin position="520"/>
        <end position="528"/>
    </location>
</feature>
<feature type="helix" evidence="12">
    <location>
        <begin position="530"/>
        <end position="542"/>
    </location>
</feature>
<feature type="strand" evidence="12">
    <location>
        <begin position="543"/>
        <end position="549"/>
    </location>
</feature>
<feature type="strand" evidence="12">
    <location>
        <begin position="555"/>
        <end position="562"/>
    </location>
</feature>
<feature type="strand" evidence="14">
    <location>
        <begin position="567"/>
        <end position="570"/>
    </location>
</feature>
<feature type="helix" evidence="12">
    <location>
        <begin position="572"/>
        <end position="590"/>
    </location>
</feature>
<feature type="helix" evidence="12">
    <location>
        <begin position="595"/>
        <end position="597"/>
    </location>
</feature>
<feature type="strand" evidence="12">
    <location>
        <begin position="599"/>
        <end position="604"/>
    </location>
</feature>
<feature type="helix" evidence="12">
    <location>
        <begin position="609"/>
        <end position="615"/>
    </location>
</feature>
<feature type="turn" evidence="13">
    <location>
        <begin position="638"/>
        <end position="640"/>
    </location>
</feature>
<feature type="helix" evidence="12">
    <location>
        <begin position="645"/>
        <end position="653"/>
    </location>
</feature>
<feature type="helix" evidence="12">
    <location>
        <begin position="657"/>
        <end position="659"/>
    </location>
</feature>
<feature type="strand" evidence="12">
    <location>
        <begin position="667"/>
        <end position="670"/>
    </location>
</feature>
<feature type="helix" evidence="12">
    <location>
        <begin position="672"/>
        <end position="675"/>
    </location>
</feature>
<feature type="helix" evidence="12">
    <location>
        <begin position="679"/>
        <end position="694"/>
    </location>
</feature>
<feature type="strand" evidence="12">
    <location>
        <begin position="705"/>
        <end position="710"/>
    </location>
</feature>
<feature type="helix" evidence="12">
    <location>
        <begin position="713"/>
        <end position="721"/>
    </location>
</feature>
<feature type="helix" evidence="12">
    <location>
        <begin position="723"/>
        <end position="725"/>
    </location>
</feature>
<feature type="strand" evidence="12">
    <location>
        <begin position="730"/>
        <end position="732"/>
    </location>
</feature>
<feature type="strand" evidence="12">
    <location>
        <begin position="734"/>
        <end position="739"/>
    </location>
</feature>
<feature type="helix" evidence="12">
    <location>
        <begin position="740"/>
        <end position="742"/>
    </location>
</feature>
<feature type="helix" evidence="12">
    <location>
        <begin position="745"/>
        <end position="752"/>
    </location>
</feature>
<sequence length="760" mass="85357">MSELNEKLATAWEGFTKGDWQNEVNVRDFIQKNYTPYEGDESFLAGATEATTTLWDKVMEGVKLENRTHAPVDFDTAVASTITSHDAGYINKQLEKIVGLQTEAPLKRALIPFGGIKMIEGSCKAYNRELDPMIKKIFTEYRKTHNQGVFDVYTPDILRCRKSGVLTGLPDAYGRGRIIGDYRRVALYGIDYLMKDKLAQFTSLQADLENGVNLEQTIRLREEIAEQHRALGQMKEMAAKYGYDISGPATNAQEAIQWTYFGYLAAVKSQNGAAMSFGRTSTFLDVYIERDLKAGKITEQEAQEMVDHLVMKLRMVRFLRTPEYDELFSGDPIWATESIGGMGLDGRTLVTKNSFRFLNTLYTMGPSPEPNMTILWSEKLPLNFKKFAAKVSIDTSSLQYENDDLMRPDFNNDDYAIACCVSPMIVGKQMQFFGARANLAKTMLYAINGGVDEKLKMQVGPKSEPIKGDVLNYDEVMERMDHFMDWLAKQYITALNIIHYMHDKYSYEASLMALHDRDVIRTMACGIAGLSVAADSLSAIKYAKVKPIRDEDGLAIDFEIEGEYPQFGNNDPRVDDLAVDLVERFMKKIQKLHTYRDAIPTQSVLTITSNVVYGKKTGNTPDGRRAGAPFGPGANPMHGRDQKGAVASLTSVAKLPFAYAKDGISYTFSIVPNALGKDDEVRKTNLAGLMDGYFHHEASIEGGQHLNVNVMNREMLLDAMENPEKYPQLTIRVSGYAVRFNSLTKEQQQDVITRTFTQSM</sequence>
<dbReference type="EC" id="2.3.1.54" evidence="8"/>
<dbReference type="EMBL" id="X08035">
    <property type="protein sequence ID" value="CAA30828.1"/>
    <property type="molecule type" value="Genomic_DNA"/>
</dbReference>
<dbReference type="EMBL" id="U00096">
    <property type="protein sequence ID" value="AAC73989.1"/>
    <property type="molecule type" value="Genomic_DNA"/>
</dbReference>
<dbReference type="EMBL" id="AP009048">
    <property type="protein sequence ID" value="BAA35638.1"/>
    <property type="molecule type" value="Genomic_DNA"/>
</dbReference>
<dbReference type="EMBL" id="M26413">
    <property type="protein sequence ID" value="AAA20391.1"/>
    <property type="molecule type" value="Genomic_DNA"/>
</dbReference>
<dbReference type="PIR" id="S01788">
    <property type="entry name" value="S01788"/>
</dbReference>
<dbReference type="RefSeq" id="NP_415423.1">
    <property type="nucleotide sequence ID" value="NC_000913.3"/>
</dbReference>
<dbReference type="RefSeq" id="WP_001292822.1">
    <property type="nucleotide sequence ID" value="NZ_SSZK01000002.1"/>
</dbReference>
<dbReference type="PDB" id="1CM5">
    <property type="method" value="X-ray"/>
    <property type="resolution" value="2.30 A"/>
    <property type="chains" value="A/B=2-760"/>
</dbReference>
<dbReference type="PDB" id="1H16">
    <property type="method" value="X-ray"/>
    <property type="resolution" value="1.53 A"/>
    <property type="chains" value="A=2-760"/>
</dbReference>
<dbReference type="PDB" id="1H17">
    <property type="method" value="X-ray"/>
    <property type="resolution" value="1.75 A"/>
    <property type="chains" value="A=2-760"/>
</dbReference>
<dbReference type="PDB" id="1H18">
    <property type="method" value="X-ray"/>
    <property type="resolution" value="2.30 A"/>
    <property type="chains" value="A/B=2-760"/>
</dbReference>
<dbReference type="PDB" id="1MZO">
    <property type="method" value="X-ray"/>
    <property type="resolution" value="2.70 A"/>
    <property type="chains" value="A/B=2-760"/>
</dbReference>
<dbReference type="PDB" id="1QHM">
    <property type="method" value="X-ray"/>
    <property type="resolution" value="2.80 A"/>
    <property type="chains" value="A/B=2-625"/>
</dbReference>
<dbReference type="PDB" id="2PFL">
    <property type="method" value="X-ray"/>
    <property type="resolution" value="2.90 A"/>
    <property type="chains" value="A/B=2-760"/>
</dbReference>
<dbReference type="PDB" id="3PFL">
    <property type="method" value="X-ray"/>
    <property type="resolution" value="2.60 A"/>
    <property type="chains" value="A/B=2-760"/>
</dbReference>
<dbReference type="PDBsum" id="1CM5"/>
<dbReference type="PDBsum" id="1H16"/>
<dbReference type="PDBsum" id="1H17"/>
<dbReference type="PDBsum" id="1H18"/>
<dbReference type="PDBsum" id="1MZO"/>
<dbReference type="PDBsum" id="1QHM"/>
<dbReference type="PDBsum" id="2PFL"/>
<dbReference type="PDBsum" id="3PFL"/>
<dbReference type="SMR" id="P09373"/>
<dbReference type="BioGRID" id="4260835">
    <property type="interactions" value="45"/>
</dbReference>
<dbReference type="BioGRID" id="849888">
    <property type="interactions" value="4"/>
</dbReference>
<dbReference type="DIP" id="DIP-10467N"/>
<dbReference type="FunCoup" id="P09373">
    <property type="interactions" value="508"/>
</dbReference>
<dbReference type="IntAct" id="P09373">
    <property type="interactions" value="45"/>
</dbReference>
<dbReference type="STRING" id="511145.b0903"/>
<dbReference type="DrugBank" id="DB01992">
    <property type="generic name" value="Coenzyme A"/>
</dbReference>
<dbReference type="DrugBank" id="DB03278">
    <property type="generic name" value="D-Treitol"/>
</dbReference>
<dbReference type="DrugBank" id="DB03940">
    <property type="generic name" value="Oxamic Acid"/>
</dbReference>
<dbReference type="iPTMnet" id="P09373"/>
<dbReference type="jPOST" id="P09373"/>
<dbReference type="PaxDb" id="511145-b0903"/>
<dbReference type="EnsemblBacteria" id="AAC73989">
    <property type="protein sequence ID" value="AAC73989"/>
    <property type="gene ID" value="b0903"/>
</dbReference>
<dbReference type="GeneID" id="93776515"/>
<dbReference type="GeneID" id="945514"/>
<dbReference type="KEGG" id="ecj:JW0886"/>
<dbReference type="KEGG" id="eco:b0903"/>
<dbReference type="KEGG" id="ecoc:C3026_05575"/>
<dbReference type="PATRIC" id="fig|1411691.4.peg.1373"/>
<dbReference type="EchoBASE" id="EB0695"/>
<dbReference type="eggNOG" id="COG1882">
    <property type="taxonomic scope" value="Bacteria"/>
</dbReference>
<dbReference type="HOGENOM" id="CLU_023898_0_0_6"/>
<dbReference type="InParanoid" id="P09373"/>
<dbReference type="OMA" id="CAKVSIE"/>
<dbReference type="OrthoDB" id="9803969at2"/>
<dbReference type="PhylomeDB" id="P09373"/>
<dbReference type="BioCyc" id="EcoCyc:PYRUVFORMLY-MONOMER"/>
<dbReference type="BioCyc" id="MetaCyc:PYRUVFORMLY-MONOMER"/>
<dbReference type="BRENDA" id="2.3.1.54">
    <property type="organism ID" value="2026"/>
</dbReference>
<dbReference type="UniPathway" id="UPA00920">
    <property type="reaction ID" value="UER00891"/>
</dbReference>
<dbReference type="EvolutionaryTrace" id="P09373"/>
<dbReference type="PRO" id="PR:P09373"/>
<dbReference type="Proteomes" id="UP000000625">
    <property type="component" value="Chromosome"/>
</dbReference>
<dbReference type="GO" id="GO:0005829">
    <property type="term" value="C:cytosol"/>
    <property type="evidence" value="ECO:0000314"/>
    <property type="project" value="EcoCyc"/>
</dbReference>
<dbReference type="GO" id="GO:0016020">
    <property type="term" value="C:membrane"/>
    <property type="evidence" value="ECO:0007005"/>
    <property type="project" value="UniProtKB"/>
</dbReference>
<dbReference type="GO" id="GO:0008861">
    <property type="term" value="F:formate C-acetyltransferase activity"/>
    <property type="evidence" value="ECO:0000314"/>
    <property type="project" value="EcoCyc"/>
</dbReference>
<dbReference type="GO" id="GO:0006006">
    <property type="term" value="P:glucose metabolic process"/>
    <property type="evidence" value="ECO:0007669"/>
    <property type="project" value="UniProtKB-KW"/>
</dbReference>
<dbReference type="GO" id="GO:0044814">
    <property type="term" value="P:glycolytic fermentation via PFL pathway"/>
    <property type="evidence" value="ECO:0000314"/>
    <property type="project" value="EcoCyc"/>
</dbReference>
<dbReference type="CDD" id="cd01678">
    <property type="entry name" value="PFL1"/>
    <property type="match status" value="1"/>
</dbReference>
<dbReference type="FunFam" id="3.20.70.20:FF:000003">
    <property type="entry name" value="Formate acetyltransferase"/>
    <property type="match status" value="1"/>
</dbReference>
<dbReference type="Gene3D" id="3.20.70.20">
    <property type="match status" value="1"/>
</dbReference>
<dbReference type="InterPro" id="IPR050244">
    <property type="entry name" value="Auton_GlycylRad_Cofactor"/>
</dbReference>
<dbReference type="InterPro" id="IPR005949">
    <property type="entry name" value="Form_AcTrfase"/>
</dbReference>
<dbReference type="InterPro" id="IPR019777">
    <property type="entry name" value="Form_AcTrfase_GR_CS"/>
</dbReference>
<dbReference type="InterPro" id="IPR001150">
    <property type="entry name" value="Gly_radical"/>
</dbReference>
<dbReference type="InterPro" id="IPR004184">
    <property type="entry name" value="PFL_dom"/>
</dbReference>
<dbReference type="NCBIfam" id="TIGR01255">
    <property type="entry name" value="pyr_form_ly_1"/>
    <property type="match status" value="1"/>
</dbReference>
<dbReference type="PANTHER" id="PTHR30191">
    <property type="entry name" value="FORMATE ACETYLTRANSFERASE"/>
    <property type="match status" value="1"/>
</dbReference>
<dbReference type="PANTHER" id="PTHR30191:SF0">
    <property type="entry name" value="FORMATE ACETYLTRANSFERASE 1"/>
    <property type="match status" value="1"/>
</dbReference>
<dbReference type="Pfam" id="PF01228">
    <property type="entry name" value="Gly_radical"/>
    <property type="match status" value="1"/>
</dbReference>
<dbReference type="Pfam" id="PF02901">
    <property type="entry name" value="PFL-like"/>
    <property type="match status" value="1"/>
</dbReference>
<dbReference type="PIRSF" id="PIRSF000379">
    <property type="entry name" value="For_Ac_trans_1"/>
    <property type="match status" value="1"/>
</dbReference>
<dbReference type="SUPFAM" id="SSF51998">
    <property type="entry name" value="PFL-like glycyl radical enzymes"/>
    <property type="match status" value="1"/>
</dbReference>
<dbReference type="PROSITE" id="PS00850">
    <property type="entry name" value="GLY_RADICAL_1"/>
    <property type="match status" value="1"/>
</dbReference>
<dbReference type="PROSITE" id="PS51149">
    <property type="entry name" value="GLY_RADICAL_2"/>
    <property type="match status" value="1"/>
</dbReference>
<dbReference type="PROSITE" id="PS51554">
    <property type="entry name" value="PFL"/>
    <property type="match status" value="1"/>
</dbReference>
<reference key="1">
    <citation type="journal article" date="1988" name="Eur. J. Biochem.">
        <title>Primary structures of Escherichia coli pyruvate formate-lyase and pyruvate-formate-lyase-activating enzyme deduced from the DNA nucleotide sequences.</title>
        <authorList>
            <person name="Roedel W."/>
            <person name="Plaga W."/>
            <person name="Frank R."/>
            <person name="Knappe J."/>
        </authorList>
    </citation>
    <scope>NUCLEOTIDE SEQUENCE [GENOMIC DNA]</scope>
    <scope>PARTIAL PROTEIN SEQUENCE</scope>
    <source>
        <strain>K12</strain>
    </source>
</reference>
<reference key="2">
    <citation type="journal article" date="1996" name="DNA Res.">
        <title>A 718-kb DNA sequence of the Escherichia coli K-12 genome corresponding to the 12.7-28.0 min region on the linkage map.</title>
        <authorList>
            <person name="Oshima T."/>
            <person name="Aiba H."/>
            <person name="Baba T."/>
            <person name="Fujita K."/>
            <person name="Hayashi K."/>
            <person name="Honjo A."/>
            <person name="Ikemoto K."/>
            <person name="Inada T."/>
            <person name="Itoh T."/>
            <person name="Kajihara M."/>
            <person name="Kanai K."/>
            <person name="Kashimoto K."/>
            <person name="Kimura S."/>
            <person name="Kitagawa M."/>
            <person name="Makino K."/>
            <person name="Masuda S."/>
            <person name="Miki T."/>
            <person name="Mizobuchi K."/>
            <person name="Mori H."/>
            <person name="Motomura K."/>
            <person name="Nakamura Y."/>
            <person name="Nashimoto H."/>
            <person name="Nishio Y."/>
            <person name="Saito N."/>
            <person name="Sampei G."/>
            <person name="Seki Y."/>
            <person name="Tagami H."/>
            <person name="Takemoto K."/>
            <person name="Wada C."/>
            <person name="Yamamoto Y."/>
            <person name="Yano M."/>
            <person name="Horiuchi T."/>
        </authorList>
    </citation>
    <scope>NUCLEOTIDE SEQUENCE [LARGE SCALE GENOMIC DNA]</scope>
    <source>
        <strain>K12 / W3110 / ATCC 27325 / DSM 5911</strain>
    </source>
</reference>
<reference key="3">
    <citation type="journal article" date="1997" name="Science">
        <title>The complete genome sequence of Escherichia coli K-12.</title>
        <authorList>
            <person name="Blattner F.R."/>
            <person name="Plunkett G. III"/>
            <person name="Bloch C.A."/>
            <person name="Perna N.T."/>
            <person name="Burland V."/>
            <person name="Riley M."/>
            <person name="Collado-Vides J."/>
            <person name="Glasner J.D."/>
            <person name="Rode C.K."/>
            <person name="Mayhew G.F."/>
            <person name="Gregor J."/>
            <person name="Davis N.W."/>
            <person name="Kirkpatrick H.A."/>
            <person name="Goeden M.A."/>
            <person name="Rose D.J."/>
            <person name="Mau B."/>
            <person name="Shao Y."/>
        </authorList>
    </citation>
    <scope>NUCLEOTIDE SEQUENCE [LARGE SCALE GENOMIC DNA]</scope>
    <source>
        <strain>K12 / MG1655 / ATCC 47076</strain>
    </source>
</reference>
<reference key="4">
    <citation type="journal article" date="2006" name="Mol. Syst. Biol.">
        <title>Highly accurate genome sequences of Escherichia coli K-12 strains MG1655 and W3110.</title>
        <authorList>
            <person name="Hayashi K."/>
            <person name="Morooka N."/>
            <person name="Yamamoto Y."/>
            <person name="Fujita K."/>
            <person name="Isono K."/>
            <person name="Choi S."/>
            <person name="Ohtsubo E."/>
            <person name="Baba T."/>
            <person name="Wanner B.L."/>
            <person name="Mori H."/>
            <person name="Horiuchi T."/>
        </authorList>
    </citation>
    <scope>NUCLEOTIDE SEQUENCE [LARGE SCALE GENOMIC DNA]</scope>
    <source>
        <strain>K12 / W3110 / ATCC 27325 / DSM 5911</strain>
    </source>
</reference>
<reference key="5">
    <citation type="journal article" date="1989" name="J. Bacteriol.">
        <title>Novel transcriptional control of the pyruvate formate-lyase gene: upstream regulatory sequences and multiple promoters regulate anaerobic expression.</title>
        <authorList>
            <person name="Sawers G."/>
            <person name="Boeck A."/>
        </authorList>
    </citation>
    <scope>NUCLEOTIDE SEQUENCE [GENOMIC DNA] OF 1-13</scope>
</reference>
<reference key="6">
    <citation type="journal article" date="1974" name="Eur. J. Biochem.">
        <title>Pyruvate formate-lyase of Escherichia coli: the acetyl-enzyme intermediate.</title>
        <authorList>
            <person name="Knappe J."/>
            <person name="Blaschkowski H.P."/>
            <person name="Groebner P."/>
            <person name="Schmitt T."/>
        </authorList>
    </citation>
    <scope>FUNCTION</scope>
    <scope>CATALYTIC ACTIVITY</scope>
    <scope>BIOPHYSICOCHEMICAL PROPERTIES</scope>
</reference>
<reference key="7">
    <citation type="journal article" date="1992" name="Proc. Natl. Acad. Sci. U.S.A.">
        <title>The free radical in pyruvate formate-lyase is located on glycine-734.</title>
        <authorList>
            <person name="Wagner A.F.V."/>
            <person name="Frey M."/>
            <person name="Neugebauer F.A."/>
            <person name="Schaefer W."/>
            <person name="Knappe J."/>
        </authorList>
    </citation>
    <scope>ORGANIC RADICAL AT GLY-420</scope>
</reference>
<reference key="8">
    <citation type="journal article" date="1998" name="Electrophoresis">
        <title>Extraction of membrane proteins by differential solubilization for separation using two-dimensional gel electrophoresis.</title>
        <authorList>
            <person name="Molloy M.P."/>
            <person name="Herbert B.R."/>
            <person name="Walsh B.J."/>
            <person name="Tyler M.I."/>
            <person name="Traini M."/>
            <person name="Sanchez J.-C."/>
            <person name="Hochstrasser D.F."/>
            <person name="Williams K.L."/>
            <person name="Gooley A.A."/>
        </authorList>
    </citation>
    <scope>PROTEIN SEQUENCE OF 2-6</scope>
    <source>
        <strain>K12 / W3110 / ATCC 27325 / DSM 5911</strain>
    </source>
</reference>
<reference key="9">
    <citation type="journal article" date="1997" name="Electrophoresis">
        <title>Escherichia coli proteome analysis using the gene-protein database.</title>
        <authorList>
            <person name="VanBogelen R.A."/>
            <person name="Abshire K.Z."/>
            <person name="Moldover B."/>
            <person name="Olson E.R."/>
            <person name="Neidhardt F.C."/>
        </authorList>
    </citation>
    <scope>IDENTIFICATION BY 2D-GEL</scope>
</reference>
<reference key="10">
    <citation type="journal article" date="2009" name="Mol. Cell. Proteomics">
        <title>Lysine acetylation is a highly abundant and evolutionarily conserved modification in Escherichia coli.</title>
        <authorList>
            <person name="Zhang J."/>
            <person name="Sprung R."/>
            <person name="Pei J."/>
            <person name="Tan X."/>
            <person name="Kim S."/>
            <person name="Zhu H."/>
            <person name="Liu C.F."/>
            <person name="Grishin N.V."/>
            <person name="Zhao Y."/>
        </authorList>
    </citation>
    <scope>ACETYLATION [LARGE SCALE ANALYSIS] AT LYS-63; LYS-117; LYS-195; LYS-454; LYS-541 AND LYS-591</scope>
    <scope>IDENTIFICATION BY MASS SPECTROMETRY</scope>
    <source>
        <strain>K12 / JW1106</strain>
        <strain>K12 / MG1655 / ATCC 47076</strain>
    </source>
</reference>
<reference key="11">
    <citation type="journal article" date="2011" name="Nat. Chem. Biol.">
        <title>Identification of lysine succinylation as a new post-translational modification.</title>
        <authorList>
            <person name="Zhang Z."/>
            <person name="Tan M."/>
            <person name="Xie Z."/>
            <person name="Dai L."/>
            <person name="Chen Y."/>
            <person name="Zhao Y."/>
        </authorList>
    </citation>
    <scope>SUCCINYLATION AT LYS-63; LYS-107; LYS-117; LYS-124; LYS-195; LYS-454; LYS-467 AND LYS-654</scope>
    <source>
        <strain>K12</strain>
    </source>
</reference>
<reference key="12">
    <citation type="journal article" date="2014" name="J. Mol. Biol.">
        <title>Pyruvate formate-lyase interacts directly with the formate channel FocA to regulate formate translocation.</title>
        <authorList>
            <person name="Doberenz C."/>
            <person name="Zorn M."/>
            <person name="Falke D."/>
            <person name="Nannemann D."/>
            <person name="Hunger D."/>
            <person name="Beyer L."/>
            <person name="Ihling C.H."/>
            <person name="Meiler J."/>
            <person name="Sinz A."/>
            <person name="Sawers R.G."/>
        </authorList>
    </citation>
    <scope>FUNCTION IN FOCA REGULATION</scope>
    <scope>INTERACTION WITH FOCA</scope>
</reference>
<reference key="13">
    <citation type="journal article" date="1999" name="Nat. Struct. Biol.">
        <title>Structure and mechanism of the glycyl radical enzyme pyruvate formate-lyase.</title>
        <authorList>
            <person name="Becker A."/>
            <person name="Fritz-Wolf K."/>
            <person name="Kabsch W."/>
            <person name="Knappe J."/>
            <person name="Schultz S."/>
            <person name="Wagner A.F.V."/>
        </authorList>
    </citation>
    <scope>X-RAY CRYSTALLOGRAPHY (2.3 ANGSTROMS)</scope>
    <scope>SUBUNIT</scope>
</reference>
<accession>P09373</accession>
<accession>P76826</accession>
<accession>Q47478</accession>
<evidence type="ECO:0000255" key="1">
    <source>
        <dbReference type="PROSITE-ProRule" id="PRU00493"/>
    </source>
</evidence>
<evidence type="ECO:0000255" key="2">
    <source>
        <dbReference type="PROSITE-ProRule" id="PRU00887"/>
    </source>
</evidence>
<evidence type="ECO:0000269" key="3">
    <source>
    </source>
</evidence>
<evidence type="ECO:0000269" key="4">
    <source>
    </source>
</evidence>
<evidence type="ECO:0000269" key="5">
    <source>
    </source>
</evidence>
<evidence type="ECO:0000269" key="6">
    <source>
    </source>
</evidence>
<evidence type="ECO:0000269" key="7">
    <source>
    </source>
</evidence>
<evidence type="ECO:0000269" key="8">
    <source>
    </source>
</evidence>
<evidence type="ECO:0000269" key="9">
    <source>
    </source>
</evidence>
<evidence type="ECO:0000305" key="10"/>
<evidence type="ECO:0007829" key="11">
    <source>
        <dbReference type="PDB" id="1CM5"/>
    </source>
</evidence>
<evidence type="ECO:0007829" key="12">
    <source>
        <dbReference type="PDB" id="1H16"/>
    </source>
</evidence>
<evidence type="ECO:0007829" key="13">
    <source>
        <dbReference type="PDB" id="1H17"/>
    </source>
</evidence>
<evidence type="ECO:0007829" key="14">
    <source>
        <dbReference type="PDB" id="1QHM"/>
    </source>
</evidence>
<name>PFLB_ECOLI</name>
<gene>
    <name type="primary">pflB</name>
    <name type="synonym">pfl</name>
    <name type="ordered locus">b0903</name>
    <name type="ordered locus">JW0886</name>
</gene>
<keyword id="KW-0002">3D-structure</keyword>
<keyword id="KW-0007">Acetylation</keyword>
<keyword id="KW-0012">Acyltransferase</keyword>
<keyword id="KW-0119">Carbohydrate metabolism</keyword>
<keyword id="KW-0963">Cytoplasm</keyword>
<keyword id="KW-0903">Direct protein sequencing</keyword>
<keyword id="KW-0313">Glucose metabolism</keyword>
<keyword id="KW-0556">Organic radical</keyword>
<keyword id="KW-1185">Reference proteome</keyword>
<keyword id="KW-0808">Transferase</keyword>
<protein>
    <recommendedName>
        <fullName>Formate acetyltransferase 1</fullName>
        <ecNumber evidence="8">2.3.1.54</ecNumber>
    </recommendedName>
    <alternativeName>
        <fullName>Pyruvate formate-lyase 1</fullName>
    </alternativeName>
</protein>